<reference evidence="5" key="1">
    <citation type="submission" date="1998-09" db="EMBL/GenBank/DDBJ databases">
        <title>The XL-domain of rat XLas is encoded by a single exon.</title>
        <authorList>
            <person name="Wang Y.Z."/>
            <person name="Kehlenbach R.H."/>
            <person name="Huttner W.B."/>
        </authorList>
    </citation>
    <scope>NUCLEOTIDE SEQUENCE [GENOMIC DNA]</scope>
    <source>
        <strain evidence="5">Wistar</strain>
    </source>
</reference>
<reference evidence="4 6" key="2">
    <citation type="journal article" date="2001" name="EMBO J.">
        <title>Two overlapping reading frames in a single exon encode interacting proteins -- a novel way of gene usage.</title>
        <authorList>
            <person name="Klemke M."/>
            <person name="Kehlenbach R.H."/>
            <person name="Huttner W.B."/>
        </authorList>
    </citation>
    <scope>NUCLEOTIDE SEQUENCE [MRNA] OF 227-738</scope>
    <scope>INTERACTION WITH GNAS XLAS ISOFORMS</scope>
    <scope>SUBCELLULAR LOCATION</scope>
    <source>
        <strain evidence="5">Wistar</strain>
    </source>
</reference>
<accession>Q9Z213</accession>
<accession>Q924W1</accession>
<sequence length="738" mass="80341">MSPSPTRLTVRSVDPLKTPNLTSRAPVRPSRKSKWAETTAHLQRKPCHSRSNSPAWEISGPPWSSLDHLDPIRHQSLQPSDFGARTPTGAHPGLGAYSPPPEEAMPFEFNEPAQEDRCQPPLQVPDLAPGGPEAWVSRALPAEPGNLGFENTGFREDYSPPPEESVPFQLDGEEFGGDSPPPDSASHATNRHWRFEFPTVAVPSTLCLRPARTRLPSGSRAPLADHARLSDLLTSHTTFPQWRSPDPCLRLAEPPLGSTTTPLSIWTAPQSQVMARPSKSREPQLRASTQRDPHLSDKQPRQETALSAAPLQRRQKSPPSSEEKDPPPNLKQCISSQLLLRSPERTLPKPIRTQLHTQFFRSVLRKSEESQPCPPIFRLLLKMRAQMSGQNQTEGQPQPPLPSPKTTENQPPPPPPSQPPSQPLSQPPSQPPSQPPSQLPRQSLTPKPSLPPGQSPTPKRSPQPRQPLPRRRSLPPGQPPSPLRSPLPGLSLLPEPIQPPGLSLEPQRCQPLLGQPPLEQPMQVLWSGEPGHSRLLQPLGHPSLPAQQLPPEQPLLPAQSLPAGQPLPPQAGPILDPPARRSRLLTRLLRGLLRGRVPGLTNTNVAEAAAGMRLRPASARSSPPAMSRKKGPLAASSGFCGETAALASPGATQSGATRSATSSPEPSEAASVYLSVPDHDPSAPGRPRILWKRGANRCAKKPWRCESRSAQIRNAASSSTSNWRRRRWTTCVHTACCF</sequence>
<name>ALEX_RAT</name>
<dbReference type="EMBL" id="AF093569">
    <property type="protein sequence ID" value="AAD03033.1"/>
    <property type="molecule type" value="Genomic_DNA"/>
</dbReference>
<dbReference type="EMBL" id="X84047">
    <property type="protein sequence ID" value="CAC39212.1"/>
    <property type="status" value="ALT_INIT"/>
    <property type="molecule type" value="mRNA"/>
</dbReference>
<dbReference type="AGR" id="RGD:2716"/>
<dbReference type="RGD" id="2716">
    <property type="gene designation" value="Gnas"/>
</dbReference>
<dbReference type="Proteomes" id="UP000002494">
    <property type="component" value="Unplaced"/>
</dbReference>
<dbReference type="GO" id="GO:0030142">
    <property type="term" value="C:COPI-coated Golgi to ER transport vesicle"/>
    <property type="evidence" value="ECO:0000314"/>
    <property type="project" value="RGD"/>
</dbReference>
<dbReference type="GO" id="GO:0005737">
    <property type="term" value="C:cytoplasm"/>
    <property type="evidence" value="ECO:0000266"/>
    <property type="project" value="RGD"/>
</dbReference>
<dbReference type="GO" id="GO:0005829">
    <property type="term" value="C:cytosol"/>
    <property type="evidence" value="ECO:0000266"/>
    <property type="project" value="RGD"/>
</dbReference>
<dbReference type="GO" id="GO:0030425">
    <property type="term" value="C:dendrite"/>
    <property type="evidence" value="ECO:0000266"/>
    <property type="project" value="RGD"/>
</dbReference>
<dbReference type="GO" id="GO:0005768">
    <property type="term" value="C:endosome"/>
    <property type="evidence" value="ECO:0000314"/>
    <property type="project" value="RGD"/>
</dbReference>
<dbReference type="GO" id="GO:0005834">
    <property type="term" value="C:heterotrimeric G-protein complex"/>
    <property type="evidence" value="ECO:0000314"/>
    <property type="project" value="RGD"/>
</dbReference>
<dbReference type="GO" id="GO:0016020">
    <property type="term" value="C:membrane"/>
    <property type="evidence" value="ECO:0000266"/>
    <property type="project" value="RGD"/>
</dbReference>
<dbReference type="GO" id="GO:0043025">
    <property type="term" value="C:neuronal cell body"/>
    <property type="evidence" value="ECO:0000314"/>
    <property type="project" value="RGD"/>
</dbReference>
<dbReference type="GO" id="GO:0005634">
    <property type="term" value="C:nucleus"/>
    <property type="evidence" value="ECO:0000266"/>
    <property type="project" value="RGD"/>
</dbReference>
<dbReference type="GO" id="GO:0048471">
    <property type="term" value="C:perinuclear region of cytoplasm"/>
    <property type="evidence" value="ECO:0000314"/>
    <property type="project" value="RGD"/>
</dbReference>
<dbReference type="GO" id="GO:0005886">
    <property type="term" value="C:plasma membrane"/>
    <property type="evidence" value="ECO:0000266"/>
    <property type="project" value="RGD"/>
</dbReference>
<dbReference type="GO" id="GO:0055037">
    <property type="term" value="C:recycling endosome"/>
    <property type="evidence" value="ECO:0000314"/>
    <property type="project" value="RGD"/>
</dbReference>
<dbReference type="GO" id="GO:0001726">
    <property type="term" value="C:ruffle"/>
    <property type="evidence" value="ECO:0000314"/>
    <property type="project" value="RGD"/>
</dbReference>
<dbReference type="GO" id="GO:0042383">
    <property type="term" value="C:sarcolemma"/>
    <property type="evidence" value="ECO:0000314"/>
    <property type="project" value="RGD"/>
</dbReference>
<dbReference type="GO" id="GO:0032588">
    <property type="term" value="C:trans-Golgi network membrane"/>
    <property type="evidence" value="ECO:0000266"/>
    <property type="project" value="RGD"/>
</dbReference>
<dbReference type="GO" id="GO:0010856">
    <property type="term" value="F:adenylate cyclase activator activity"/>
    <property type="evidence" value="ECO:0000266"/>
    <property type="project" value="RGD"/>
</dbReference>
<dbReference type="GO" id="GO:0010854">
    <property type="term" value="F:adenylate cyclase regulator activity"/>
    <property type="evidence" value="ECO:0000266"/>
    <property type="project" value="RGD"/>
</dbReference>
<dbReference type="GO" id="GO:0043014">
    <property type="term" value="F:alpha-tubulin binding"/>
    <property type="evidence" value="ECO:0000314"/>
    <property type="project" value="RGD"/>
</dbReference>
<dbReference type="GO" id="GO:0031698">
    <property type="term" value="F:beta-2 adrenergic receptor binding"/>
    <property type="evidence" value="ECO:0000353"/>
    <property type="project" value="RGD"/>
</dbReference>
<dbReference type="GO" id="GO:0051430">
    <property type="term" value="F:corticotropin-releasing hormone receptor 1 binding"/>
    <property type="evidence" value="ECO:0000353"/>
    <property type="project" value="RGD"/>
</dbReference>
<dbReference type="GO" id="GO:0031748">
    <property type="term" value="F:D1 dopamine receptor binding"/>
    <property type="evidence" value="ECO:0000353"/>
    <property type="project" value="RGD"/>
</dbReference>
<dbReference type="GO" id="GO:0003925">
    <property type="term" value="F:G protein activity"/>
    <property type="evidence" value="ECO:0000266"/>
    <property type="project" value="RGD"/>
</dbReference>
<dbReference type="GO" id="GO:0001965">
    <property type="term" value="F:G-protein alpha-subunit binding"/>
    <property type="evidence" value="ECO:0000353"/>
    <property type="project" value="RGD"/>
</dbReference>
<dbReference type="GO" id="GO:0031681">
    <property type="term" value="F:G-protein beta-subunit binding"/>
    <property type="evidence" value="ECO:0000314"/>
    <property type="project" value="RGD"/>
</dbReference>
<dbReference type="GO" id="GO:0031683">
    <property type="term" value="F:G-protein beta/gamma-subunit complex binding"/>
    <property type="evidence" value="ECO:0000318"/>
    <property type="project" value="GO_Central"/>
</dbReference>
<dbReference type="GO" id="GO:0005525">
    <property type="term" value="F:GTP binding"/>
    <property type="evidence" value="ECO:0000314"/>
    <property type="project" value="RGD"/>
</dbReference>
<dbReference type="GO" id="GO:0003924">
    <property type="term" value="F:GTPase activity"/>
    <property type="evidence" value="ECO:0000318"/>
    <property type="project" value="GO_Central"/>
</dbReference>
<dbReference type="GO" id="GO:0005159">
    <property type="term" value="F:insulin-like growth factor receptor binding"/>
    <property type="evidence" value="ECO:0000353"/>
    <property type="project" value="RGD"/>
</dbReference>
<dbReference type="GO" id="GO:0035255">
    <property type="term" value="F:ionotropic glutamate receptor binding"/>
    <property type="evidence" value="ECO:0000353"/>
    <property type="project" value="RGD"/>
</dbReference>
<dbReference type="GO" id="GO:0031852">
    <property type="term" value="F:mu-type opioid receptor binding"/>
    <property type="evidence" value="ECO:0000314"/>
    <property type="project" value="RGD"/>
</dbReference>
<dbReference type="GO" id="GO:0019904">
    <property type="term" value="F:protein domain specific binding"/>
    <property type="evidence" value="ECO:0000353"/>
    <property type="project" value="RGD"/>
</dbReference>
<dbReference type="GO" id="GO:0071880">
    <property type="term" value="P:adenylate cyclase-activating adrenergic receptor signaling pathway"/>
    <property type="evidence" value="ECO:0000266"/>
    <property type="project" value="RGD"/>
</dbReference>
<dbReference type="GO" id="GO:0007191">
    <property type="term" value="P:adenylate cyclase-activating dopamine receptor signaling pathway"/>
    <property type="evidence" value="ECO:0000266"/>
    <property type="project" value="RGD"/>
</dbReference>
<dbReference type="GO" id="GO:0007189">
    <property type="term" value="P:adenylate cyclase-activating G protein-coupled receptor signaling pathway"/>
    <property type="evidence" value="ECO:0000314"/>
    <property type="project" value="RGD"/>
</dbReference>
<dbReference type="GO" id="GO:0007192">
    <property type="term" value="P:adenylate cyclase-activating serotonin receptor signaling pathway"/>
    <property type="evidence" value="ECO:0000266"/>
    <property type="project" value="RGD"/>
</dbReference>
<dbReference type="GO" id="GO:0060348">
    <property type="term" value="P:bone development"/>
    <property type="evidence" value="ECO:0000266"/>
    <property type="project" value="RGD"/>
</dbReference>
<dbReference type="GO" id="GO:0051216">
    <property type="term" value="P:cartilage development"/>
    <property type="evidence" value="ECO:0000266"/>
    <property type="project" value="RGD"/>
</dbReference>
<dbReference type="GO" id="GO:0071377">
    <property type="term" value="P:cellular response to glucagon stimulus"/>
    <property type="evidence" value="ECO:0000266"/>
    <property type="project" value="RGD"/>
</dbReference>
<dbReference type="GO" id="GO:0050890">
    <property type="term" value="P:cognition"/>
    <property type="evidence" value="ECO:0000266"/>
    <property type="project" value="RGD"/>
</dbReference>
<dbReference type="GO" id="GO:0048589">
    <property type="term" value="P:developmental growth"/>
    <property type="evidence" value="ECO:0000266"/>
    <property type="project" value="RGD"/>
</dbReference>
<dbReference type="GO" id="GO:0048701">
    <property type="term" value="P:embryonic cranial skeleton morphogenesis"/>
    <property type="evidence" value="ECO:0000266"/>
    <property type="project" value="RGD"/>
</dbReference>
<dbReference type="GO" id="GO:0035116">
    <property type="term" value="P:embryonic hindlimb morphogenesis"/>
    <property type="evidence" value="ECO:0000266"/>
    <property type="project" value="RGD"/>
</dbReference>
<dbReference type="GO" id="GO:0001958">
    <property type="term" value="P:endochondral ossification"/>
    <property type="evidence" value="ECO:0000266"/>
    <property type="project" value="RGD"/>
</dbReference>
<dbReference type="GO" id="GO:0006112">
    <property type="term" value="P:energy reserve metabolic process"/>
    <property type="evidence" value="ECO:0000266"/>
    <property type="project" value="RGD"/>
</dbReference>
<dbReference type="GO" id="GO:0007186">
    <property type="term" value="P:G protein-coupled receptor signaling pathway"/>
    <property type="evidence" value="ECO:0000315"/>
    <property type="project" value="RGD"/>
</dbReference>
<dbReference type="GO" id="GO:0071514">
    <property type="term" value="P:genomic imprinting"/>
    <property type="evidence" value="ECO:0000266"/>
    <property type="project" value="RGD"/>
</dbReference>
<dbReference type="GO" id="GO:0060789">
    <property type="term" value="P:hair follicle placode formation"/>
    <property type="evidence" value="ECO:0000266"/>
    <property type="project" value="RGD"/>
</dbReference>
<dbReference type="GO" id="GO:0035264">
    <property type="term" value="P:multicellular organism growth"/>
    <property type="evidence" value="ECO:0000266"/>
    <property type="project" value="RGD"/>
</dbReference>
<dbReference type="GO" id="GO:0045776">
    <property type="term" value="P:negative regulation of blood pressure"/>
    <property type="evidence" value="ECO:0000315"/>
    <property type="project" value="RGD"/>
</dbReference>
<dbReference type="GO" id="GO:0070527">
    <property type="term" value="P:platelet aggregation"/>
    <property type="evidence" value="ECO:0000266"/>
    <property type="project" value="RGD"/>
</dbReference>
<dbReference type="GO" id="GO:0008284">
    <property type="term" value="P:positive regulation of cell population proliferation"/>
    <property type="evidence" value="ECO:0000314"/>
    <property type="project" value="RGD"/>
</dbReference>
<dbReference type="GO" id="GO:0120162">
    <property type="term" value="P:positive regulation of cold-induced thermogenesis"/>
    <property type="evidence" value="ECO:0000250"/>
    <property type="project" value="YuBioLab"/>
</dbReference>
<dbReference type="GO" id="GO:0032024">
    <property type="term" value="P:positive regulation of insulin secretion"/>
    <property type="evidence" value="ECO:0000266"/>
    <property type="project" value="RGD"/>
</dbReference>
<dbReference type="GO" id="GO:0045669">
    <property type="term" value="P:positive regulation of osteoblast differentiation"/>
    <property type="evidence" value="ECO:0000266"/>
    <property type="project" value="RGD"/>
</dbReference>
<dbReference type="GO" id="GO:0045672">
    <property type="term" value="P:positive regulation of osteoclast differentiation"/>
    <property type="evidence" value="ECO:0000266"/>
    <property type="project" value="RGD"/>
</dbReference>
<dbReference type="GO" id="GO:0010765">
    <property type="term" value="P:positive regulation of sodium ion transport"/>
    <property type="evidence" value="ECO:0000315"/>
    <property type="project" value="RGD"/>
</dbReference>
<dbReference type="GO" id="GO:0040032">
    <property type="term" value="P:post-embryonic body morphogenesis"/>
    <property type="evidence" value="ECO:0000266"/>
    <property type="project" value="RGD"/>
</dbReference>
<dbReference type="GO" id="GO:0009791">
    <property type="term" value="P:post-embryonic development"/>
    <property type="evidence" value="ECO:0000266"/>
    <property type="project" value="RGD"/>
</dbReference>
<dbReference type="GO" id="GO:2000828">
    <property type="term" value="P:regulation of parathyroid hormone secretion"/>
    <property type="evidence" value="ECO:0000266"/>
    <property type="project" value="RGD"/>
</dbReference>
<dbReference type="GO" id="GO:0009966">
    <property type="term" value="P:regulation of signal transduction"/>
    <property type="evidence" value="ECO:0000266"/>
    <property type="project" value="RGD"/>
</dbReference>
<dbReference type="GO" id="GO:0006357">
    <property type="term" value="P:regulation of transcription by RNA polymerase II"/>
    <property type="evidence" value="ECO:0000315"/>
    <property type="project" value="RGD"/>
</dbReference>
<dbReference type="GO" id="GO:0071107">
    <property type="term" value="P:response to parathyroid hormone"/>
    <property type="evidence" value="ECO:0000266"/>
    <property type="project" value="RGD"/>
</dbReference>
<dbReference type="GO" id="GO:0034695">
    <property type="term" value="P:response to prostaglandin E"/>
    <property type="evidence" value="ECO:0000266"/>
    <property type="project" value="RGD"/>
</dbReference>
<dbReference type="GO" id="GO:0009410">
    <property type="term" value="P:response to xenobiotic stimulus"/>
    <property type="evidence" value="ECO:0000266"/>
    <property type="project" value="RGD"/>
</dbReference>
<dbReference type="GO" id="GO:0007606">
    <property type="term" value="P:sensory perception of chemical stimulus"/>
    <property type="evidence" value="ECO:0000318"/>
    <property type="project" value="GO_Central"/>
</dbReference>
<dbReference type="GO" id="GO:0001501">
    <property type="term" value="P:skeletal system development"/>
    <property type="evidence" value="ECO:0000266"/>
    <property type="project" value="RGD"/>
</dbReference>
<dbReference type="GO" id="GO:0043588">
    <property type="term" value="P:skin development"/>
    <property type="evidence" value="ECO:0000266"/>
    <property type="project" value="RGD"/>
</dbReference>
<dbReference type="GO" id="GO:0001894">
    <property type="term" value="P:tissue homeostasis"/>
    <property type="evidence" value="ECO:0000266"/>
    <property type="project" value="RGD"/>
</dbReference>
<keyword id="KW-1003">Cell membrane</keyword>
<keyword id="KW-0966">Cell projection</keyword>
<keyword id="KW-0472">Membrane</keyword>
<keyword id="KW-1185">Reference proteome</keyword>
<feature type="chain" id="PRO_0000253966" description="Protein ALEX">
    <location>
        <begin position="1"/>
        <end position="738"/>
    </location>
</feature>
<feature type="region of interest" description="Disordered" evidence="2">
    <location>
        <begin position="1"/>
        <end position="105"/>
    </location>
</feature>
<feature type="region of interest" description="Disordered" evidence="2">
    <location>
        <begin position="155"/>
        <end position="188"/>
    </location>
</feature>
<feature type="region of interest" description="Disordered" evidence="2">
    <location>
        <begin position="237"/>
        <end position="350"/>
    </location>
</feature>
<feature type="region of interest" description="Disordered" evidence="2">
    <location>
        <begin position="387"/>
        <end position="516"/>
    </location>
</feature>
<feature type="region of interest" description="Disordered" evidence="2">
    <location>
        <begin position="528"/>
        <end position="578"/>
    </location>
</feature>
<feature type="region of interest" description="Disordered" evidence="2">
    <location>
        <begin position="611"/>
        <end position="689"/>
    </location>
</feature>
<feature type="compositionally biased region" description="Polar residues" evidence="2">
    <location>
        <begin position="257"/>
        <end position="273"/>
    </location>
</feature>
<feature type="compositionally biased region" description="Basic and acidic residues" evidence="2">
    <location>
        <begin position="279"/>
        <end position="301"/>
    </location>
</feature>
<feature type="compositionally biased region" description="Polar residues" evidence="2">
    <location>
        <begin position="387"/>
        <end position="396"/>
    </location>
</feature>
<feature type="compositionally biased region" description="Pro residues" evidence="2">
    <location>
        <begin position="410"/>
        <end position="438"/>
    </location>
</feature>
<feature type="compositionally biased region" description="Pro residues" evidence="2">
    <location>
        <begin position="448"/>
        <end position="467"/>
    </location>
</feature>
<feature type="compositionally biased region" description="Pro residues" evidence="2">
    <location>
        <begin position="476"/>
        <end position="485"/>
    </location>
</feature>
<feature type="compositionally biased region" description="Low complexity" evidence="2">
    <location>
        <begin position="542"/>
        <end position="564"/>
    </location>
</feature>
<feature type="compositionally biased region" description="Low complexity" evidence="2">
    <location>
        <begin position="615"/>
        <end position="626"/>
    </location>
</feature>
<feature type="compositionally biased region" description="Low complexity" evidence="2">
    <location>
        <begin position="656"/>
        <end position="671"/>
    </location>
</feature>
<organism>
    <name type="scientific">Rattus norvegicus</name>
    <name type="common">Rat</name>
    <dbReference type="NCBI Taxonomy" id="10116"/>
    <lineage>
        <taxon>Eukaryota</taxon>
        <taxon>Metazoa</taxon>
        <taxon>Chordata</taxon>
        <taxon>Craniata</taxon>
        <taxon>Vertebrata</taxon>
        <taxon>Euteleostomi</taxon>
        <taxon>Mammalia</taxon>
        <taxon>Eutheria</taxon>
        <taxon>Euarchontoglires</taxon>
        <taxon>Glires</taxon>
        <taxon>Rodentia</taxon>
        <taxon>Myomorpha</taxon>
        <taxon>Muroidea</taxon>
        <taxon>Muridae</taxon>
        <taxon>Murinae</taxon>
        <taxon>Rattus</taxon>
    </lineage>
</organism>
<protein>
    <recommendedName>
        <fullName>Protein ALEX</fullName>
    </recommendedName>
    <alternativeName>
        <fullName>Alternative gene product encoded by XL-exon</fullName>
    </alternativeName>
</protein>
<comment type="function">
    <text evidence="1">May inhibit the adenylyl cyclase-stimulating activity of guanine nucleotide-binding protein G(s) subunit alpha which is produced from the same locus in a different open reading frame.</text>
</comment>
<comment type="subunit">
    <text evidence="3">Interacts with the N-terminal region of the XLas isoforms of guanine nucleotide-binding protein G(s) subunit alpha.</text>
</comment>
<comment type="subcellular location">
    <subcellularLocation>
        <location evidence="3">Cell membrane</location>
        <topology evidence="3">Peripheral membrane protein</topology>
    </subcellularLocation>
    <subcellularLocation>
        <location evidence="3">Cell projection</location>
        <location evidence="3">Ruffle</location>
    </subcellularLocation>
    <text>Predominantly associated with cell membrane ruffles.</text>
</comment>
<comment type="miscellaneous">
    <text evidence="3">This protein is produced by a bicistronic gene which also produces the guanine nucleotide-binding protein G(s) subunit alpha from an overlapping reading frame.</text>
</comment>
<comment type="similarity">
    <text evidence="4">Belongs to the ALEX family.</text>
</comment>
<comment type="sequence caution" evidence="4">
    <conflict type="erroneous initiation">
        <sequence resource="EMBL-CDS" id="CAC39212"/>
    </conflict>
</comment>
<evidence type="ECO:0000250" key="1">
    <source>
        <dbReference type="UniProtKB" id="P84996"/>
    </source>
</evidence>
<evidence type="ECO:0000256" key="2">
    <source>
        <dbReference type="SAM" id="MobiDB-lite"/>
    </source>
</evidence>
<evidence type="ECO:0000269" key="3">
    <source>
    </source>
</evidence>
<evidence type="ECO:0000305" key="4"/>
<evidence type="ECO:0000312" key="5">
    <source>
        <dbReference type="EMBL" id="AAD03033.1"/>
    </source>
</evidence>
<evidence type="ECO:0000312" key="6">
    <source>
        <dbReference type="EMBL" id="CAC39212.1"/>
    </source>
</evidence>
<evidence type="ECO:0000312" key="7">
    <source>
        <dbReference type="RGD" id="2716"/>
    </source>
</evidence>
<gene>
    <name evidence="7" type="primary">Gnas</name>
    <name evidence="7" type="synonym">Gnas1</name>
</gene>
<proteinExistence type="evidence at protein level"/>